<evidence type="ECO:0000255" key="1">
    <source>
        <dbReference type="HAMAP-Rule" id="MF_00102"/>
    </source>
</evidence>
<evidence type="ECO:0000305" key="2"/>
<proteinExistence type="inferred from homology"/>
<protein>
    <recommendedName>
        <fullName evidence="1">4-hydroxy-tetrahydrodipicolinate reductase</fullName>
        <shortName evidence="1">HTPA reductase</shortName>
        <ecNumber evidence="1">1.17.1.8</ecNumber>
    </recommendedName>
</protein>
<dbReference type="EC" id="1.17.1.8" evidence="1"/>
<dbReference type="EMBL" id="BX950229">
    <property type="protein sequence ID" value="CAF30479.1"/>
    <property type="molecule type" value="Genomic_DNA"/>
</dbReference>
<dbReference type="RefSeq" id="WP_011170867.1">
    <property type="nucleotide sequence ID" value="NC_005791.1"/>
</dbReference>
<dbReference type="SMR" id="Q6LYR5"/>
<dbReference type="STRING" id="267377.MMP0923"/>
<dbReference type="EnsemblBacteria" id="CAF30479">
    <property type="protein sequence ID" value="CAF30479"/>
    <property type="gene ID" value="MMP0923"/>
</dbReference>
<dbReference type="GeneID" id="2761082"/>
<dbReference type="KEGG" id="mmp:MMP0923"/>
<dbReference type="PATRIC" id="fig|267377.15.peg.951"/>
<dbReference type="eggNOG" id="arCOG04393">
    <property type="taxonomic scope" value="Archaea"/>
</dbReference>
<dbReference type="HOGENOM" id="CLU_047479_2_1_2"/>
<dbReference type="OrthoDB" id="195035at2157"/>
<dbReference type="UniPathway" id="UPA00034">
    <property type="reaction ID" value="UER00018"/>
</dbReference>
<dbReference type="Proteomes" id="UP000000590">
    <property type="component" value="Chromosome"/>
</dbReference>
<dbReference type="GO" id="GO:0005737">
    <property type="term" value="C:cytoplasm"/>
    <property type="evidence" value="ECO:0007669"/>
    <property type="project" value="UniProtKB-SubCell"/>
</dbReference>
<dbReference type="GO" id="GO:0008839">
    <property type="term" value="F:4-hydroxy-tetrahydrodipicolinate reductase"/>
    <property type="evidence" value="ECO:0007669"/>
    <property type="project" value="UniProtKB-EC"/>
</dbReference>
<dbReference type="GO" id="GO:0051287">
    <property type="term" value="F:NAD binding"/>
    <property type="evidence" value="ECO:0007669"/>
    <property type="project" value="UniProtKB-UniRule"/>
</dbReference>
<dbReference type="GO" id="GO:0050661">
    <property type="term" value="F:NADP binding"/>
    <property type="evidence" value="ECO:0007669"/>
    <property type="project" value="UniProtKB-UniRule"/>
</dbReference>
<dbReference type="GO" id="GO:0016726">
    <property type="term" value="F:oxidoreductase activity, acting on CH or CH2 groups, NAD or NADP as acceptor"/>
    <property type="evidence" value="ECO:0007669"/>
    <property type="project" value="UniProtKB-UniRule"/>
</dbReference>
<dbReference type="GO" id="GO:0019877">
    <property type="term" value="P:diaminopimelate biosynthetic process"/>
    <property type="evidence" value="ECO:0007669"/>
    <property type="project" value="UniProtKB-UniRule"/>
</dbReference>
<dbReference type="GO" id="GO:0009089">
    <property type="term" value="P:lysine biosynthetic process via diaminopimelate"/>
    <property type="evidence" value="ECO:0007669"/>
    <property type="project" value="UniProtKB-UniRule"/>
</dbReference>
<dbReference type="CDD" id="cd02274">
    <property type="entry name" value="DHDPR_N"/>
    <property type="match status" value="1"/>
</dbReference>
<dbReference type="FunFam" id="3.30.360.10:FF:000004">
    <property type="entry name" value="4-hydroxy-tetrahydrodipicolinate reductase"/>
    <property type="match status" value="1"/>
</dbReference>
<dbReference type="Gene3D" id="3.30.360.10">
    <property type="entry name" value="Dihydrodipicolinate Reductase, domain 2"/>
    <property type="match status" value="1"/>
</dbReference>
<dbReference type="Gene3D" id="3.40.50.720">
    <property type="entry name" value="NAD(P)-binding Rossmann-like Domain"/>
    <property type="match status" value="1"/>
</dbReference>
<dbReference type="HAMAP" id="MF_00102">
    <property type="entry name" value="DapB"/>
    <property type="match status" value="1"/>
</dbReference>
<dbReference type="InterPro" id="IPR022663">
    <property type="entry name" value="DapB_C"/>
</dbReference>
<dbReference type="InterPro" id="IPR000846">
    <property type="entry name" value="DapB_N"/>
</dbReference>
<dbReference type="InterPro" id="IPR022664">
    <property type="entry name" value="DapB_N_CS"/>
</dbReference>
<dbReference type="InterPro" id="IPR023940">
    <property type="entry name" value="DHDPR_bac"/>
</dbReference>
<dbReference type="InterPro" id="IPR036291">
    <property type="entry name" value="NAD(P)-bd_dom_sf"/>
</dbReference>
<dbReference type="NCBIfam" id="TIGR00036">
    <property type="entry name" value="dapB"/>
    <property type="match status" value="1"/>
</dbReference>
<dbReference type="PANTHER" id="PTHR20836:SF0">
    <property type="entry name" value="4-HYDROXY-TETRAHYDRODIPICOLINATE REDUCTASE 1, CHLOROPLASTIC-RELATED"/>
    <property type="match status" value="1"/>
</dbReference>
<dbReference type="PANTHER" id="PTHR20836">
    <property type="entry name" value="DIHYDRODIPICOLINATE REDUCTASE"/>
    <property type="match status" value="1"/>
</dbReference>
<dbReference type="Pfam" id="PF05173">
    <property type="entry name" value="DapB_C"/>
    <property type="match status" value="1"/>
</dbReference>
<dbReference type="Pfam" id="PF01113">
    <property type="entry name" value="DapB_N"/>
    <property type="match status" value="1"/>
</dbReference>
<dbReference type="PIRSF" id="PIRSF000161">
    <property type="entry name" value="DHPR"/>
    <property type="match status" value="1"/>
</dbReference>
<dbReference type="SUPFAM" id="SSF55347">
    <property type="entry name" value="Glyceraldehyde-3-phosphate dehydrogenase-like, C-terminal domain"/>
    <property type="match status" value="1"/>
</dbReference>
<dbReference type="SUPFAM" id="SSF51735">
    <property type="entry name" value="NAD(P)-binding Rossmann-fold domains"/>
    <property type="match status" value="1"/>
</dbReference>
<dbReference type="PROSITE" id="PS01298">
    <property type="entry name" value="DAPB"/>
    <property type="match status" value="1"/>
</dbReference>
<sequence length="270" mass="28861">MVKVAVTGALGRMGSGIIKTITETDGLDVVAAIDIPNHPKKGQDVGELTGLGKIGVALSTSDELEAVLKESGAEVLVDFTAAAPCVQTAKTASKLGVNLVIGTTGFTPEQRAEMEDAISKNKVAATISQNYAVGVNIFFKTLELLAQKLGDYDIEILEMHHKFKKDAPSGTALRAAEIIQNNLNRDSNVIYGREGITGERTKEEICIHALRGGDIVGDHSVIFTTEGERLELSHRVTSRQSLVSGAVLAIKFVAQKKEGIYNTFDVLDLN</sequence>
<comment type="function">
    <text evidence="1">Catalyzes the conversion of 4-hydroxy-tetrahydrodipicolinate (HTPA) to tetrahydrodipicolinate.</text>
</comment>
<comment type="catalytic activity">
    <reaction evidence="1">
        <text>(S)-2,3,4,5-tetrahydrodipicolinate + NAD(+) + H2O = (2S,4S)-4-hydroxy-2,3,4,5-tetrahydrodipicolinate + NADH + H(+)</text>
        <dbReference type="Rhea" id="RHEA:35323"/>
        <dbReference type="ChEBI" id="CHEBI:15377"/>
        <dbReference type="ChEBI" id="CHEBI:15378"/>
        <dbReference type="ChEBI" id="CHEBI:16845"/>
        <dbReference type="ChEBI" id="CHEBI:57540"/>
        <dbReference type="ChEBI" id="CHEBI:57945"/>
        <dbReference type="ChEBI" id="CHEBI:67139"/>
        <dbReference type="EC" id="1.17.1.8"/>
    </reaction>
</comment>
<comment type="catalytic activity">
    <reaction evidence="1">
        <text>(S)-2,3,4,5-tetrahydrodipicolinate + NADP(+) + H2O = (2S,4S)-4-hydroxy-2,3,4,5-tetrahydrodipicolinate + NADPH + H(+)</text>
        <dbReference type="Rhea" id="RHEA:35331"/>
        <dbReference type="ChEBI" id="CHEBI:15377"/>
        <dbReference type="ChEBI" id="CHEBI:15378"/>
        <dbReference type="ChEBI" id="CHEBI:16845"/>
        <dbReference type="ChEBI" id="CHEBI:57783"/>
        <dbReference type="ChEBI" id="CHEBI:58349"/>
        <dbReference type="ChEBI" id="CHEBI:67139"/>
        <dbReference type="EC" id="1.17.1.8"/>
    </reaction>
</comment>
<comment type="pathway">
    <text evidence="1">Amino-acid biosynthesis; L-lysine biosynthesis via DAP pathway; (S)-tetrahydrodipicolinate from L-aspartate: step 4/4.</text>
</comment>
<comment type="subcellular location">
    <subcellularLocation>
        <location evidence="1">Cytoplasm</location>
    </subcellularLocation>
</comment>
<comment type="similarity">
    <text evidence="1">Belongs to the DapB family.</text>
</comment>
<comment type="caution">
    <text evidence="2">Was originally thought to be a dihydrodipicolinate reductase (DHDPR), catalyzing the conversion of dihydrodipicolinate to tetrahydrodipicolinate. However, it was shown in E.coli that the substrate of the enzymatic reaction is not dihydrodipicolinate (DHDP) but in fact (2S,4S)-4-hydroxy-2,3,4,5-tetrahydrodipicolinic acid (HTPA), the product released by the DapA-catalyzed reaction.</text>
</comment>
<name>DAPB_METMP</name>
<gene>
    <name evidence="1" type="primary">dapB</name>
    <name type="ordered locus">MMP0923</name>
</gene>
<reference key="1">
    <citation type="journal article" date="2004" name="J. Bacteriol.">
        <title>Complete genome sequence of the genetically tractable hydrogenotrophic methanogen Methanococcus maripaludis.</title>
        <authorList>
            <person name="Hendrickson E.L."/>
            <person name="Kaul R."/>
            <person name="Zhou Y."/>
            <person name="Bovee D."/>
            <person name="Chapman P."/>
            <person name="Chung J."/>
            <person name="Conway de Macario E."/>
            <person name="Dodsworth J.A."/>
            <person name="Gillett W."/>
            <person name="Graham D.E."/>
            <person name="Hackett M."/>
            <person name="Haydock A.K."/>
            <person name="Kang A."/>
            <person name="Land M.L."/>
            <person name="Levy R."/>
            <person name="Lie T.J."/>
            <person name="Major T.A."/>
            <person name="Moore B.C."/>
            <person name="Porat I."/>
            <person name="Palmeiri A."/>
            <person name="Rouse G."/>
            <person name="Saenphimmachak C."/>
            <person name="Soell D."/>
            <person name="Van Dien S."/>
            <person name="Wang T."/>
            <person name="Whitman W.B."/>
            <person name="Xia Q."/>
            <person name="Zhang Y."/>
            <person name="Larimer F.W."/>
            <person name="Olson M.V."/>
            <person name="Leigh J.A."/>
        </authorList>
    </citation>
    <scope>NUCLEOTIDE SEQUENCE [LARGE SCALE GENOMIC DNA]</scope>
    <source>
        <strain>DSM 14266 / JCM 13030 / NBRC 101832 / S2 / LL</strain>
    </source>
</reference>
<feature type="chain" id="PRO_0000228406" description="4-hydroxy-tetrahydrodipicolinate reductase">
    <location>
        <begin position="1"/>
        <end position="270"/>
    </location>
</feature>
<feature type="active site" description="Proton donor/acceptor" evidence="1">
    <location>
        <position position="160"/>
    </location>
</feature>
<feature type="active site" description="Proton donor" evidence="1">
    <location>
        <position position="164"/>
    </location>
</feature>
<feature type="binding site" evidence="1">
    <location>
        <begin position="8"/>
        <end position="13"/>
    </location>
    <ligand>
        <name>NAD(+)</name>
        <dbReference type="ChEBI" id="CHEBI:57540"/>
    </ligand>
</feature>
<feature type="binding site" evidence="1">
    <location>
        <position position="34"/>
    </location>
    <ligand>
        <name>NAD(+)</name>
        <dbReference type="ChEBI" id="CHEBI:57540"/>
    </ligand>
</feature>
<feature type="binding site" evidence="1">
    <location>
        <begin position="102"/>
        <end position="104"/>
    </location>
    <ligand>
        <name>NAD(+)</name>
        <dbReference type="ChEBI" id="CHEBI:57540"/>
    </ligand>
</feature>
<feature type="binding site" evidence="1">
    <location>
        <begin position="128"/>
        <end position="131"/>
    </location>
    <ligand>
        <name>NAD(+)</name>
        <dbReference type="ChEBI" id="CHEBI:57540"/>
    </ligand>
</feature>
<feature type="binding site" evidence="1">
    <location>
        <position position="161"/>
    </location>
    <ligand>
        <name>(S)-2,3,4,5-tetrahydrodipicolinate</name>
        <dbReference type="ChEBI" id="CHEBI:16845"/>
    </ligand>
</feature>
<feature type="binding site" evidence="1">
    <location>
        <begin position="170"/>
        <end position="171"/>
    </location>
    <ligand>
        <name>(S)-2,3,4,5-tetrahydrodipicolinate</name>
        <dbReference type="ChEBI" id="CHEBI:16845"/>
    </ligand>
</feature>
<organism>
    <name type="scientific">Methanococcus maripaludis (strain DSM 14266 / JCM 13030 / NBRC 101832 / S2 / LL)</name>
    <dbReference type="NCBI Taxonomy" id="267377"/>
    <lineage>
        <taxon>Archaea</taxon>
        <taxon>Methanobacteriati</taxon>
        <taxon>Methanobacteriota</taxon>
        <taxon>Methanomada group</taxon>
        <taxon>Methanococci</taxon>
        <taxon>Methanococcales</taxon>
        <taxon>Methanococcaceae</taxon>
        <taxon>Methanococcus</taxon>
    </lineage>
</organism>
<keyword id="KW-0028">Amino-acid biosynthesis</keyword>
<keyword id="KW-0963">Cytoplasm</keyword>
<keyword id="KW-0220">Diaminopimelate biosynthesis</keyword>
<keyword id="KW-0457">Lysine biosynthesis</keyword>
<keyword id="KW-0520">NAD</keyword>
<keyword id="KW-0521">NADP</keyword>
<keyword id="KW-0560">Oxidoreductase</keyword>
<keyword id="KW-1185">Reference proteome</keyword>
<accession>Q6LYR5</accession>